<gene>
    <name type="ordered locus">BAB2_0432</name>
</gene>
<feature type="chain" id="PRO_1000014056" description="Putative nickel-responsive regulator">
    <location>
        <begin position="1"/>
        <end position="132"/>
    </location>
</feature>
<feature type="binding site" evidence="1">
    <location>
        <position position="77"/>
    </location>
    <ligand>
        <name>Ni(2+)</name>
        <dbReference type="ChEBI" id="CHEBI:49786"/>
    </ligand>
</feature>
<feature type="binding site" evidence="1">
    <location>
        <position position="88"/>
    </location>
    <ligand>
        <name>Ni(2+)</name>
        <dbReference type="ChEBI" id="CHEBI:49786"/>
    </ligand>
</feature>
<feature type="binding site" evidence="1">
    <location>
        <position position="90"/>
    </location>
    <ligand>
        <name>Ni(2+)</name>
        <dbReference type="ChEBI" id="CHEBI:49786"/>
    </ligand>
</feature>
<feature type="binding site" evidence="1">
    <location>
        <position position="96"/>
    </location>
    <ligand>
        <name>Ni(2+)</name>
        <dbReference type="ChEBI" id="CHEBI:49786"/>
    </ligand>
</feature>
<accession>Q2YJ35</accession>
<reference key="1">
    <citation type="journal article" date="2005" name="Infect. Immun.">
        <title>Whole-genome analyses of speciation events in pathogenic Brucellae.</title>
        <authorList>
            <person name="Chain P.S."/>
            <person name="Comerci D.J."/>
            <person name="Tolmasky M.E."/>
            <person name="Larimer F.W."/>
            <person name="Malfatti S.A."/>
            <person name="Vergez L.M."/>
            <person name="Aguero F."/>
            <person name="Land M.L."/>
            <person name="Ugalde R.A."/>
            <person name="Garcia E."/>
        </authorList>
    </citation>
    <scope>NUCLEOTIDE SEQUENCE [LARGE SCALE GENOMIC DNA]</scope>
    <source>
        <strain>2308</strain>
    </source>
</reference>
<sequence>MQRITITIDDDLMAALDRMIEIKGYQNRSEALRDLARTGLQQASLEEGQMEACVGVLSYTYDHSARDLSKKLTNTHHDHHNISVASMHVHLDHDRCLEVSILKGKTDDVRHFADHVKAERHVTHGTLAVLPL</sequence>
<comment type="function">
    <text evidence="1">Transcriptional regulator.</text>
</comment>
<comment type="cofactor">
    <cofactor evidence="1">
        <name>Ni(2+)</name>
        <dbReference type="ChEBI" id="CHEBI:49786"/>
    </cofactor>
    <text evidence="1">Binds 1 nickel ion per subunit.</text>
</comment>
<comment type="similarity">
    <text evidence="1">Belongs to the transcriptional regulatory CopG/NikR family.</text>
</comment>
<evidence type="ECO:0000255" key="1">
    <source>
        <dbReference type="HAMAP-Rule" id="MF_00476"/>
    </source>
</evidence>
<protein>
    <recommendedName>
        <fullName evidence="1">Putative nickel-responsive regulator</fullName>
    </recommendedName>
</protein>
<dbReference type="EMBL" id="AM040265">
    <property type="protein sequence ID" value="CAJ12598.1"/>
    <property type="molecule type" value="Genomic_DNA"/>
</dbReference>
<dbReference type="SMR" id="Q2YJ35"/>
<dbReference type="STRING" id="359391.BAB2_0432"/>
<dbReference type="KEGG" id="bmf:BAB2_0432"/>
<dbReference type="PATRIC" id="fig|359391.11.peg.2626"/>
<dbReference type="HOGENOM" id="CLU_113319_1_4_5"/>
<dbReference type="PhylomeDB" id="Q2YJ35"/>
<dbReference type="PHI-base" id="PHI:9061"/>
<dbReference type="Proteomes" id="UP000002719">
    <property type="component" value="Chromosome II"/>
</dbReference>
<dbReference type="GO" id="GO:0003677">
    <property type="term" value="F:DNA binding"/>
    <property type="evidence" value="ECO:0007669"/>
    <property type="project" value="UniProtKB-KW"/>
</dbReference>
<dbReference type="GO" id="GO:0003700">
    <property type="term" value="F:DNA-binding transcription factor activity"/>
    <property type="evidence" value="ECO:0007669"/>
    <property type="project" value="UniProtKB-UniRule"/>
</dbReference>
<dbReference type="GO" id="GO:0016151">
    <property type="term" value="F:nickel cation binding"/>
    <property type="evidence" value="ECO:0007669"/>
    <property type="project" value="UniProtKB-UniRule"/>
</dbReference>
<dbReference type="GO" id="GO:0010045">
    <property type="term" value="P:response to nickel cation"/>
    <property type="evidence" value="ECO:0007669"/>
    <property type="project" value="InterPro"/>
</dbReference>
<dbReference type="CDD" id="cd22231">
    <property type="entry name" value="RHH_NikR_HicB-like"/>
    <property type="match status" value="1"/>
</dbReference>
<dbReference type="Gene3D" id="3.30.70.1150">
    <property type="entry name" value="ACT-like. Chain A, domain 2"/>
    <property type="match status" value="1"/>
</dbReference>
<dbReference type="Gene3D" id="1.10.1220.10">
    <property type="entry name" value="Met repressor-like"/>
    <property type="match status" value="1"/>
</dbReference>
<dbReference type="HAMAP" id="MF_00476">
    <property type="entry name" value="NikR"/>
    <property type="match status" value="1"/>
</dbReference>
<dbReference type="InterPro" id="IPR027271">
    <property type="entry name" value="Acetolactate_synth/TF_NikR_C"/>
</dbReference>
<dbReference type="InterPro" id="IPR045865">
    <property type="entry name" value="ACT-like_dom_sf"/>
</dbReference>
<dbReference type="InterPro" id="IPR013321">
    <property type="entry name" value="Arc_rbn_hlx_hlx"/>
</dbReference>
<dbReference type="InterPro" id="IPR002145">
    <property type="entry name" value="CopG"/>
</dbReference>
<dbReference type="InterPro" id="IPR050192">
    <property type="entry name" value="CopG/NikR_regulator"/>
</dbReference>
<dbReference type="InterPro" id="IPR022988">
    <property type="entry name" value="Ni_resp_reg_NikR"/>
</dbReference>
<dbReference type="InterPro" id="IPR014160">
    <property type="entry name" value="Nickel_NikR_proteobac"/>
</dbReference>
<dbReference type="InterPro" id="IPR010985">
    <property type="entry name" value="Ribbon_hlx_hlx"/>
</dbReference>
<dbReference type="InterPro" id="IPR014864">
    <property type="entry name" value="TF_NikR_Ni-bd_C"/>
</dbReference>
<dbReference type="NCBIfam" id="TIGR02793">
    <property type="entry name" value="nikR"/>
    <property type="match status" value="1"/>
</dbReference>
<dbReference type="NCBIfam" id="NF002815">
    <property type="entry name" value="PRK02967.1"/>
    <property type="match status" value="1"/>
</dbReference>
<dbReference type="NCBIfam" id="NF003381">
    <property type="entry name" value="PRK04460.1"/>
    <property type="match status" value="1"/>
</dbReference>
<dbReference type="PANTHER" id="PTHR34719">
    <property type="entry name" value="NICKEL-RESPONSIVE REGULATOR"/>
    <property type="match status" value="1"/>
</dbReference>
<dbReference type="PANTHER" id="PTHR34719:SF2">
    <property type="entry name" value="NICKEL-RESPONSIVE REGULATOR"/>
    <property type="match status" value="1"/>
</dbReference>
<dbReference type="Pfam" id="PF08753">
    <property type="entry name" value="NikR_C"/>
    <property type="match status" value="1"/>
</dbReference>
<dbReference type="Pfam" id="PF01402">
    <property type="entry name" value="RHH_1"/>
    <property type="match status" value="1"/>
</dbReference>
<dbReference type="SUPFAM" id="SSF55021">
    <property type="entry name" value="ACT-like"/>
    <property type="match status" value="1"/>
</dbReference>
<dbReference type="SUPFAM" id="SSF47598">
    <property type="entry name" value="Ribbon-helix-helix"/>
    <property type="match status" value="1"/>
</dbReference>
<keyword id="KW-0238">DNA-binding</keyword>
<keyword id="KW-0479">Metal-binding</keyword>
<keyword id="KW-0533">Nickel</keyword>
<keyword id="KW-1185">Reference proteome</keyword>
<keyword id="KW-0804">Transcription</keyword>
<keyword id="KW-0805">Transcription regulation</keyword>
<name>NIKR_BRUA2</name>
<organism>
    <name type="scientific">Brucella abortus (strain 2308)</name>
    <dbReference type="NCBI Taxonomy" id="359391"/>
    <lineage>
        <taxon>Bacteria</taxon>
        <taxon>Pseudomonadati</taxon>
        <taxon>Pseudomonadota</taxon>
        <taxon>Alphaproteobacteria</taxon>
        <taxon>Hyphomicrobiales</taxon>
        <taxon>Brucellaceae</taxon>
        <taxon>Brucella/Ochrobactrum group</taxon>
        <taxon>Brucella</taxon>
    </lineage>
</organism>
<proteinExistence type="inferred from homology"/>